<sequence>MEKASGRKSLALSTAENGIENAGLELTEEGINSEQTRRMEVQGHSLSDDVRPATHQRSYLQPLTKARTFCQRHASLFKKILLGLLCLAYAAYFLAACILDFQRALALFVITCLVILVLLLHFLKKFLGKKLTRCLKPFKNSQLRLWIKRVFAGVSLVGLILWLALDTAQRPEQLISFAGICMFVLILFACSKHHSAVSWRTVFWGLGLQFVFGLLVIRTDPGFIAFQWLGDQVQIFLAYTVAGSSFVLGDTLVNDVFAFQSLPIIIFFGCVMSILYYLGLVQWVVQKIAWFLQVTMRTTATETLAVAGNIFVGMTEAPLLIRPYLADLTLSEIHAVMTSGFATISGTVLGAFISFGIDASSLISASVMGAPCALALSKLVYPEEEESKFKSKEGVKLPRGKESNVLEAASNGATDAIALVANVAANLVAFLAVLAFINAALSWLGELVDIQGLTFQVICSYILRPMVYMMGVEWTDCPMVAEMVGIKFFTNEFVAYQQLSQYKKKRLSGMEEWIDGQKQWISVRAEVITTFSLCGFANLSSIGITLGGLTSMVPHRKSDLSKVVIRALFTGSCVSFISACVAGILYVPRGAETDCVSFLSTSFTNRSYETYVCCRELFQNTYLNGTNPPSFSGAWEDKAFSAMALANCCGFYNNTVCA</sequence>
<reference key="1">
    <citation type="journal article" date="2000" name="Pharm. Res.">
        <title>Molecular cloning of a Na+-dependent nucleoside transporter from rabbit intestine.</title>
        <authorList>
            <person name="Gerstin K.M."/>
            <person name="Dresser M.J."/>
            <person name="Wang J."/>
            <person name="Giacomini K.M."/>
        </authorList>
    </citation>
    <scope>NUCLEOTIDE SEQUENCE [MRNA]</scope>
    <scope>FUNCTION</scope>
    <scope>TRANSPORTER ACTIVITY</scope>
    <scope>SUBCELLULAR LOCATION</scope>
    <source>
        <tissue>Small intestine</tissue>
    </source>
</reference>
<comment type="function">
    <text evidence="1 4">Sodium and pyrimidine nucleoside symporter of the plasma membrane that imports uridine, thymidine and cytidine into cells by coupling their transport to the transmembrane sodium electrochemical gradient (PubMed:11028933). Also transports adenosine, an atypical substrate transported with high apparent affinity, but low maximum velocity. Therefore, exhibits the transport characteristics of the nucleoside transport system cit or N2 subtype (N2/cit). Involved in renal nucleoside (re)absorption (By similarity).</text>
</comment>
<comment type="catalytic activity">
    <reaction evidence="4">
        <text>uridine(out) + Na(+)(out) = uridine(in) + Na(+)(in)</text>
        <dbReference type="Rhea" id="RHEA:69887"/>
        <dbReference type="ChEBI" id="CHEBI:16704"/>
        <dbReference type="ChEBI" id="CHEBI:29101"/>
    </reaction>
</comment>
<comment type="catalytic activity">
    <reaction evidence="1">
        <text>thymidine(out) + Na(+)(out) = thymidine(in) + Na(+)(in)</text>
        <dbReference type="Rhea" id="RHEA:69891"/>
        <dbReference type="ChEBI" id="CHEBI:17748"/>
        <dbReference type="ChEBI" id="CHEBI:29101"/>
    </reaction>
</comment>
<comment type="catalytic activity">
    <reaction evidence="1">
        <text>cytidine(out) + Na(+)(out) = cytidine(in) + Na(+)(in)</text>
        <dbReference type="Rhea" id="RHEA:69895"/>
        <dbReference type="ChEBI" id="CHEBI:17562"/>
        <dbReference type="ChEBI" id="CHEBI:29101"/>
    </reaction>
</comment>
<comment type="catalytic activity">
    <reaction evidence="1">
        <text>adenosine(out) + Na(+)(out) = adenosine(in) + Na(+)(in)</text>
        <dbReference type="Rhea" id="RHEA:69927"/>
        <dbReference type="ChEBI" id="CHEBI:16335"/>
        <dbReference type="ChEBI" id="CHEBI:29101"/>
    </reaction>
</comment>
<comment type="activity regulation">
    <text evidence="1">Due to its high apparent affinity but slow transport, adenosine could act as a negative regulator of pyrimidine transport under some conditions.</text>
</comment>
<comment type="subcellular location">
    <subcellularLocation>
        <location evidence="6">Cell membrane</location>
        <topology evidence="2">Multi-pass membrane protein</topology>
    </subcellularLocation>
    <subcellularLocation>
        <location evidence="1">Apical cell membrane</location>
        <topology evidence="2">Multi-pass membrane protein</topology>
    </subcellularLocation>
</comment>
<comment type="PTM">
    <text evidence="1">N-glycosylated. N-glycosylation is required for localization to the plasma membrane and the transporter activity.</text>
</comment>
<comment type="similarity">
    <text evidence="5">Belongs to the concentrative nucleoside transporter (CNT) (TC 2.A.41) family.</text>
</comment>
<name>S28A1_RABIT</name>
<evidence type="ECO:0000250" key="1">
    <source>
        <dbReference type="UniProtKB" id="O00337"/>
    </source>
</evidence>
<evidence type="ECO:0000250" key="2">
    <source>
        <dbReference type="UniProtKB" id="Q62674"/>
    </source>
</evidence>
<evidence type="ECO:0000255" key="3"/>
<evidence type="ECO:0000269" key="4">
    <source>
    </source>
</evidence>
<evidence type="ECO:0000305" key="5"/>
<evidence type="ECO:0000305" key="6">
    <source>
    </source>
</evidence>
<protein>
    <recommendedName>
        <fullName evidence="6">Sodium/nucleoside cotransporter 1</fullName>
    </recommendedName>
    <alternativeName>
        <fullName>Concentrative nucleoside transporter 1</fullName>
        <shortName>CNT 1</shortName>
    </alternativeName>
    <alternativeName>
        <fullName>Na(+)/nucleoside cotransporter 1</fullName>
    </alternativeName>
    <alternativeName>
        <fullName>Sodium-coupled nucleoside transporter 1</fullName>
    </alternativeName>
    <alternativeName>
        <fullName>Solute carrier family 28 member 1</fullName>
    </alternativeName>
</protein>
<proteinExistence type="evidence at transcript level"/>
<keyword id="KW-1003">Cell membrane</keyword>
<keyword id="KW-0325">Glycoprotein</keyword>
<keyword id="KW-0472">Membrane</keyword>
<keyword id="KW-1185">Reference proteome</keyword>
<keyword id="KW-0769">Symport</keyword>
<keyword id="KW-0812">Transmembrane</keyword>
<keyword id="KW-1133">Transmembrane helix</keyword>
<keyword id="KW-0813">Transport</keyword>
<dbReference type="EMBL" id="AF161716">
    <property type="protein sequence ID" value="AAF80451.1"/>
    <property type="molecule type" value="mRNA"/>
</dbReference>
<dbReference type="RefSeq" id="NP_001076260.1">
    <property type="nucleotide sequence ID" value="NM_001082791.1"/>
</dbReference>
<dbReference type="SMR" id="Q9MZT2"/>
<dbReference type="FunCoup" id="Q9MZT2">
    <property type="interactions" value="2"/>
</dbReference>
<dbReference type="STRING" id="9986.ENSOCUP00000012330"/>
<dbReference type="GlyCosmos" id="Q9MZT2">
    <property type="glycosylation" value="1 site, No reported glycans"/>
</dbReference>
<dbReference type="PaxDb" id="9986-ENSOCUP00000012330"/>
<dbReference type="GeneID" id="100009595"/>
<dbReference type="KEGG" id="ocu:100009595"/>
<dbReference type="CTD" id="9153"/>
<dbReference type="eggNOG" id="KOG3747">
    <property type="taxonomic scope" value="Eukaryota"/>
</dbReference>
<dbReference type="InParanoid" id="Q9MZT2"/>
<dbReference type="OrthoDB" id="6075923at2759"/>
<dbReference type="Proteomes" id="UP000001811">
    <property type="component" value="Unplaced"/>
</dbReference>
<dbReference type="GO" id="GO:0016324">
    <property type="term" value="C:apical plasma membrane"/>
    <property type="evidence" value="ECO:0000250"/>
    <property type="project" value="UniProtKB"/>
</dbReference>
<dbReference type="GO" id="GO:0005886">
    <property type="term" value="C:plasma membrane"/>
    <property type="evidence" value="ECO:0000314"/>
    <property type="project" value="UniProtKB"/>
</dbReference>
<dbReference type="GO" id="GO:0015211">
    <property type="term" value="F:purine nucleoside transmembrane transporter activity"/>
    <property type="evidence" value="ECO:0007669"/>
    <property type="project" value="TreeGrafter"/>
</dbReference>
<dbReference type="GO" id="GO:0015389">
    <property type="term" value="F:pyrimidine- and adenosine-specific:sodium symporter activity"/>
    <property type="evidence" value="ECO:0000314"/>
    <property type="project" value="UniProtKB"/>
</dbReference>
<dbReference type="GO" id="GO:0015861">
    <property type="term" value="P:cytidine transport"/>
    <property type="evidence" value="ECO:0000250"/>
    <property type="project" value="UniProtKB"/>
</dbReference>
<dbReference type="GO" id="GO:0180015">
    <property type="term" value="P:nucleoside import across plasma membrane"/>
    <property type="evidence" value="ECO:0000250"/>
    <property type="project" value="UniProtKB"/>
</dbReference>
<dbReference type="GO" id="GO:0001895">
    <property type="term" value="P:retina homeostasis"/>
    <property type="evidence" value="ECO:0007669"/>
    <property type="project" value="TreeGrafter"/>
</dbReference>
<dbReference type="GO" id="GO:0015862">
    <property type="term" value="P:uridine transmembrane transport"/>
    <property type="evidence" value="ECO:0000250"/>
    <property type="project" value="UniProtKB"/>
</dbReference>
<dbReference type="InterPro" id="IPR008276">
    <property type="entry name" value="C_nuclsd_transpt"/>
</dbReference>
<dbReference type="InterPro" id="IPR018270">
    <property type="entry name" value="C_nuclsd_transpt_met_bac"/>
</dbReference>
<dbReference type="InterPro" id="IPR011657">
    <property type="entry name" value="CNT_C_dom"/>
</dbReference>
<dbReference type="InterPro" id="IPR002668">
    <property type="entry name" value="CNT_N_dom"/>
</dbReference>
<dbReference type="InterPro" id="IPR011642">
    <property type="entry name" value="Gate_dom"/>
</dbReference>
<dbReference type="NCBIfam" id="TIGR00804">
    <property type="entry name" value="nupC"/>
    <property type="match status" value="1"/>
</dbReference>
<dbReference type="PANTHER" id="PTHR10590">
    <property type="entry name" value="SODIUM/NUCLEOSIDE COTRANSPORTER"/>
    <property type="match status" value="1"/>
</dbReference>
<dbReference type="PANTHER" id="PTHR10590:SF11">
    <property type="entry name" value="SODIUM_NUCLEOSIDE COTRANSPORTER 2"/>
    <property type="match status" value="1"/>
</dbReference>
<dbReference type="Pfam" id="PF07670">
    <property type="entry name" value="Gate"/>
    <property type="match status" value="1"/>
</dbReference>
<dbReference type="Pfam" id="PF07662">
    <property type="entry name" value="Nucleos_tra2_C"/>
    <property type="match status" value="1"/>
</dbReference>
<dbReference type="Pfam" id="PF01773">
    <property type="entry name" value="Nucleos_tra2_N"/>
    <property type="match status" value="1"/>
</dbReference>
<organism>
    <name type="scientific">Oryctolagus cuniculus</name>
    <name type="common">Rabbit</name>
    <dbReference type="NCBI Taxonomy" id="9986"/>
    <lineage>
        <taxon>Eukaryota</taxon>
        <taxon>Metazoa</taxon>
        <taxon>Chordata</taxon>
        <taxon>Craniata</taxon>
        <taxon>Vertebrata</taxon>
        <taxon>Euteleostomi</taxon>
        <taxon>Mammalia</taxon>
        <taxon>Eutheria</taxon>
        <taxon>Euarchontoglires</taxon>
        <taxon>Glires</taxon>
        <taxon>Lagomorpha</taxon>
        <taxon>Leporidae</taxon>
        <taxon>Oryctolagus</taxon>
    </lineage>
</organism>
<feature type="chain" id="PRO_0000070448" description="Sodium/nucleoside cotransporter 1">
    <location>
        <begin position="1"/>
        <end position="658"/>
    </location>
</feature>
<feature type="topological domain" description="Cytoplasmic" evidence="2">
    <location>
        <begin position="1"/>
        <end position="75"/>
    </location>
</feature>
<feature type="transmembrane region" description="Helical" evidence="3">
    <location>
        <begin position="76"/>
        <end position="99"/>
    </location>
</feature>
<feature type="topological domain" description="Extracellular" evidence="2">
    <location>
        <begin position="100"/>
        <end position="104"/>
    </location>
</feature>
<feature type="transmembrane region" description="Helical" evidence="3">
    <location>
        <begin position="105"/>
        <end position="123"/>
    </location>
</feature>
<feature type="topological domain" description="Cytoplasmic" evidence="2">
    <location>
        <begin position="124"/>
        <end position="142"/>
    </location>
</feature>
<feature type="transmembrane region" description="Helical" evidence="3">
    <location>
        <begin position="143"/>
        <end position="162"/>
    </location>
</feature>
<feature type="topological domain" description="Extracellular" evidence="2">
    <location>
        <begin position="163"/>
        <end position="173"/>
    </location>
</feature>
<feature type="transmembrane region" description="Helical" evidence="3">
    <location>
        <begin position="174"/>
        <end position="190"/>
    </location>
</feature>
<feature type="topological domain" description="Cytoplasmic" evidence="2">
    <location>
        <begin position="191"/>
        <end position="196"/>
    </location>
</feature>
<feature type="transmembrane region" description="Helical" evidence="3">
    <location>
        <begin position="197"/>
        <end position="217"/>
    </location>
</feature>
<feature type="topological domain" description="Extracellular" evidence="2">
    <location>
        <begin position="218"/>
        <end position="256"/>
    </location>
</feature>
<feature type="transmembrane region" description="Helical" evidence="3">
    <location>
        <begin position="257"/>
        <end position="278"/>
    </location>
</feature>
<feature type="topological domain" description="Cytoplasmic" evidence="2">
    <location>
        <begin position="279"/>
        <end position="289"/>
    </location>
</feature>
<feature type="transmembrane region" description="Helical" evidence="3">
    <location>
        <begin position="290"/>
        <end position="313"/>
    </location>
</feature>
<feature type="topological domain" description="Extracellular" evidence="2">
    <location>
        <begin position="314"/>
        <end position="332"/>
    </location>
</feature>
<feature type="transmembrane region" description="Helical" evidence="3">
    <location>
        <begin position="333"/>
        <end position="355"/>
    </location>
</feature>
<feature type="topological domain" description="Cytoplasmic" evidence="2">
    <location>
        <begin position="356"/>
        <end position="361"/>
    </location>
</feature>
<feature type="transmembrane region" description="Helical" evidence="3">
    <location>
        <begin position="362"/>
        <end position="381"/>
    </location>
</feature>
<feature type="topological domain" description="Extracellular" evidence="2">
    <location>
        <begin position="382"/>
        <end position="418"/>
    </location>
</feature>
<feature type="transmembrane region" description="Helical" evidence="3">
    <location>
        <begin position="419"/>
        <end position="441"/>
    </location>
</feature>
<feature type="topological domain" description="Cytoplasmic" evidence="2">
    <location>
        <begin position="442"/>
        <end position="452"/>
    </location>
</feature>
<feature type="transmembrane region" description="Helical" evidence="3">
    <location>
        <begin position="453"/>
        <end position="474"/>
    </location>
</feature>
<feature type="topological domain" description="Extracellular" evidence="2">
    <location>
        <begin position="475"/>
        <end position="529"/>
    </location>
</feature>
<feature type="transmembrane region" description="Helical" evidence="3">
    <location>
        <begin position="530"/>
        <end position="553"/>
    </location>
</feature>
<feature type="topological domain" description="Cytoplasmic" evidence="2">
    <location>
        <begin position="554"/>
        <end position="564"/>
    </location>
</feature>
<feature type="transmembrane region" description="Helical" evidence="3">
    <location>
        <begin position="565"/>
        <end position="587"/>
    </location>
</feature>
<feature type="topological domain" description="Extracellular" evidence="2">
    <location>
        <begin position="588"/>
        <end position="658"/>
    </location>
</feature>
<feature type="glycosylation site" description="N-linked (GlcNAc...) asparagine" evidence="3">
    <location>
        <position position="653"/>
    </location>
</feature>
<accession>Q9MZT2</accession>
<gene>
    <name type="primary">SLC28A1</name>
    <name type="synonym">CNT1</name>
</gene>